<gene>
    <name type="primary">TUBB3</name>
</gene>
<feature type="chain" id="PRO_0000048331" description="Tubulin beta-3 chain">
    <location>
        <begin position="1" status="less than"/>
        <end position="239"/>
    </location>
</feature>
<feature type="region of interest" description="Disordered" evidence="3">
    <location>
        <begin position="207"/>
        <end position="239"/>
    </location>
</feature>
<feature type="compositionally biased region" description="Acidic residues" evidence="3">
    <location>
        <begin position="230"/>
        <end position="239"/>
    </location>
</feature>
<feature type="binding site" evidence="2">
    <location>
        <position position="22"/>
    </location>
    <ligand>
        <name>GTP</name>
        <dbReference type="ChEBI" id="CHEBI:37565"/>
    </ligand>
</feature>
<feature type="non-terminal residue">
    <location>
        <position position="1"/>
    </location>
</feature>
<evidence type="ECO:0000250" key="1">
    <source>
        <dbReference type="UniProtKB" id="P68363"/>
    </source>
</evidence>
<evidence type="ECO:0000250" key="2">
    <source>
        <dbReference type="UniProtKB" id="Q13509"/>
    </source>
</evidence>
<evidence type="ECO:0000256" key="3">
    <source>
        <dbReference type="SAM" id="MobiDB-lite"/>
    </source>
</evidence>
<evidence type="ECO:0000305" key="4"/>
<reference key="1">
    <citation type="submission" date="1993-04" db="EMBL/GenBank/DDBJ databases">
        <title>Characterization of the alpha and beta tubulin gene families from Anemia phyllitidis L.Sw.</title>
        <authorList>
            <person name="Moepps B."/>
            <person name="Maucher H.P."/>
            <person name="Bogenberger J.M."/>
            <person name="Schraudolf H."/>
        </authorList>
    </citation>
    <scope>NUCLEOTIDE SEQUENCE [MRNA]</scope>
</reference>
<protein>
    <recommendedName>
        <fullName>Tubulin beta-3 chain</fullName>
    </recommendedName>
    <alternativeName>
        <fullName>Beta-3-tubulin</fullName>
    </alternativeName>
</protein>
<organism>
    <name type="scientific">Anemia phyllitidis</name>
    <name type="common">Fern</name>
    <name type="synonym">Osmunda phyllitidis</name>
    <dbReference type="NCBI Taxonomy" id="12940"/>
    <lineage>
        <taxon>Eukaryota</taxon>
        <taxon>Viridiplantae</taxon>
        <taxon>Streptophyta</taxon>
        <taxon>Embryophyta</taxon>
        <taxon>Tracheophyta</taxon>
        <taxon>Polypodiopsida</taxon>
        <taxon>Polypodiidae</taxon>
        <taxon>Schizaeales</taxon>
        <taxon>Anemiaceae</taxon>
        <taxon>Anemia</taxon>
    </lineage>
</organism>
<dbReference type="EMBL" id="X69187">
    <property type="protein sequence ID" value="CAA48931.1"/>
    <property type="status" value="ALT_INIT"/>
    <property type="molecule type" value="mRNA"/>
</dbReference>
<dbReference type="PIR" id="S32670">
    <property type="entry name" value="S32670"/>
</dbReference>
<dbReference type="GO" id="GO:0005737">
    <property type="term" value="C:cytoplasm"/>
    <property type="evidence" value="ECO:0007669"/>
    <property type="project" value="UniProtKB-KW"/>
</dbReference>
<dbReference type="GO" id="GO:0005874">
    <property type="term" value="C:microtubule"/>
    <property type="evidence" value="ECO:0007669"/>
    <property type="project" value="UniProtKB-KW"/>
</dbReference>
<dbReference type="GO" id="GO:0005525">
    <property type="term" value="F:GTP binding"/>
    <property type="evidence" value="ECO:0007669"/>
    <property type="project" value="UniProtKB-KW"/>
</dbReference>
<dbReference type="GO" id="GO:0003924">
    <property type="term" value="F:GTPase activity"/>
    <property type="evidence" value="ECO:0007669"/>
    <property type="project" value="InterPro"/>
</dbReference>
<dbReference type="GO" id="GO:0005200">
    <property type="term" value="F:structural constituent of cytoskeleton"/>
    <property type="evidence" value="ECO:0007669"/>
    <property type="project" value="InterPro"/>
</dbReference>
<dbReference type="GO" id="GO:0007017">
    <property type="term" value="P:microtubule-based process"/>
    <property type="evidence" value="ECO:0007669"/>
    <property type="project" value="InterPro"/>
</dbReference>
<dbReference type="CDD" id="cd02187">
    <property type="entry name" value="beta_tubulin"/>
    <property type="match status" value="1"/>
</dbReference>
<dbReference type="FunFam" id="1.10.287.600:FF:000013">
    <property type="entry name" value="Tubulin beta chain"/>
    <property type="match status" value="1"/>
</dbReference>
<dbReference type="FunFam" id="3.30.1330.20:FF:000002">
    <property type="entry name" value="Tubulin beta chain"/>
    <property type="match status" value="1"/>
</dbReference>
<dbReference type="Gene3D" id="1.10.287.600">
    <property type="entry name" value="Helix hairpin bin"/>
    <property type="match status" value="1"/>
</dbReference>
<dbReference type="Gene3D" id="3.30.1330.20">
    <property type="entry name" value="Tubulin/FtsZ, C-terminal domain"/>
    <property type="match status" value="1"/>
</dbReference>
<dbReference type="Gene3D" id="3.40.50.1440">
    <property type="entry name" value="Tubulin/FtsZ, GTPase domain"/>
    <property type="match status" value="1"/>
</dbReference>
<dbReference type="InterPro" id="IPR002453">
    <property type="entry name" value="Beta_tubulin"/>
</dbReference>
<dbReference type="InterPro" id="IPR008280">
    <property type="entry name" value="Tub_FtsZ_C"/>
</dbReference>
<dbReference type="InterPro" id="IPR000217">
    <property type="entry name" value="Tubulin"/>
</dbReference>
<dbReference type="InterPro" id="IPR037103">
    <property type="entry name" value="Tubulin/FtsZ-like_C"/>
</dbReference>
<dbReference type="InterPro" id="IPR018316">
    <property type="entry name" value="Tubulin/FtsZ_2-layer-sand-dom"/>
</dbReference>
<dbReference type="InterPro" id="IPR036525">
    <property type="entry name" value="Tubulin/FtsZ_GTPase_sf"/>
</dbReference>
<dbReference type="InterPro" id="IPR023123">
    <property type="entry name" value="Tubulin_C"/>
</dbReference>
<dbReference type="PANTHER" id="PTHR11588">
    <property type="entry name" value="TUBULIN"/>
    <property type="match status" value="1"/>
</dbReference>
<dbReference type="Pfam" id="PF03953">
    <property type="entry name" value="Tubulin_C"/>
    <property type="match status" value="1"/>
</dbReference>
<dbReference type="PRINTS" id="PR01163">
    <property type="entry name" value="BETATUBULIN"/>
</dbReference>
<dbReference type="SMART" id="SM00865">
    <property type="entry name" value="Tubulin_C"/>
    <property type="match status" value="1"/>
</dbReference>
<dbReference type="SUPFAM" id="SSF55307">
    <property type="entry name" value="Tubulin C-terminal domain-like"/>
    <property type="match status" value="1"/>
</dbReference>
<dbReference type="SUPFAM" id="SSF52490">
    <property type="entry name" value="Tubulin nucleotide-binding domain-like"/>
    <property type="match status" value="1"/>
</dbReference>
<comment type="function">
    <text>Tubulin is the major constituent of microtubules, a cylinder consisting of laterally associated linear protofilaments composed of alpha- and beta-tubulin heterodimers. Microtubules grow by the addition of GTP-tubulin dimers to the microtubule end, where a stabilizing cap forms. Below the cap, tubulin dimers are in GDP-bound state, owing to GTPase activity of alpha-tubulin.</text>
</comment>
<comment type="cofactor">
    <cofactor evidence="1">
        <name>Mg(2+)</name>
        <dbReference type="ChEBI" id="CHEBI:18420"/>
    </cofactor>
</comment>
<comment type="subunit">
    <text>Dimer of alpha and beta chains. A typical microtubule is a hollow water-filled tube with an outer diameter of 25 nm and an inner diameter of 15 nM. Alpha-beta heterodimers associate head-to-tail to form protofilaments running lengthwise along the microtubule wall with the beta-tubulin subunit facing the microtubule plus end conferring a structural polarity. Microtubules usually have 13 protofilaments but different protofilament numbers can be found in some organisms and specialized cells.</text>
</comment>
<comment type="subcellular location">
    <subcellularLocation>
        <location>Cytoplasm</location>
        <location>Cytoskeleton</location>
    </subcellularLocation>
</comment>
<comment type="similarity">
    <text evidence="4">Belongs to the tubulin family.</text>
</comment>
<comment type="sequence caution" evidence="4">
    <conflict type="erroneous initiation">
        <sequence resource="EMBL-CDS" id="CAA48931"/>
    </conflict>
</comment>
<sequence>EALYDICFRTLKLVTPTFGDLNHLISATMSGVTCCLRFPGQLNSDLRKLAVNLIPFPRLHFFMVGFAPLTSRGSQQYRALTVPELTQQMWDAKNMMCAADPRHGRYLTASAMFRGKMSTKEVDEQLINVQNKNSSYFVEWIPNNVKSSVCDIPPVGLKMACTFIGNSSSIQEMFRRDATSLTAMFRRKAFLHWYTWEGMDEMEFTEEESNMNDLVSEYQQYQDASAEPXXEQEEDYEEA</sequence>
<proteinExistence type="evidence at transcript level"/>
<accession>P33632</accession>
<name>TBB3_ANEPH</name>
<keyword id="KW-0963">Cytoplasm</keyword>
<keyword id="KW-0206">Cytoskeleton</keyword>
<keyword id="KW-0342">GTP-binding</keyword>
<keyword id="KW-0493">Microtubule</keyword>
<keyword id="KW-0547">Nucleotide-binding</keyword>